<sequence length="151" mass="17102">MAALHWLLLAALLGCTLAEEQAIFYNCEEASEAVCSVKEVRINPCNPNKKCIFKKGVNASISFDFEPNFASSKLVTTLYGPFDVEFDEMTNVDACQYTKCPTEPGKSQVLDYTLYIGKKLPQGTYTFKWKLWNPEETSQLCCFKTTIKIRK</sequence>
<comment type="function">
    <text evidence="3">Binds to lipopolysaccharide from a variety of Gram-negative bacteria and to lipid A.</text>
</comment>
<comment type="subcellular location">
    <subcellularLocation>
        <location evidence="3">Secreted</location>
    </subcellularLocation>
</comment>
<comment type="tissue specificity">
    <text evidence="3">Hemolymph (at protein level). Constitutively expressed mainly in fat body and also in hemocytes and secreted into hemolymph. Not detected in midgut, epidermis, or Malpighian tubule of naive larvae.</text>
</comment>
<comment type="induction">
    <text evidence="3">Not induced in larvae following injection with microorganisms.</text>
</comment>
<comment type="PTM">
    <text evidence="3">N-glycosylated.</text>
</comment>
<comment type="mass spectrometry" mass="16113.82" method="MALDI" evidence="3"/>
<comment type="similarity">
    <text evidence="2">Belongs to the NPC2 family.</text>
</comment>
<name>ML1P_MANSE</name>
<organism>
    <name type="scientific">Manduca sexta</name>
    <name type="common">Tobacco hawkmoth</name>
    <name type="synonym">Tobacco hornworm</name>
    <dbReference type="NCBI Taxonomy" id="7130"/>
    <lineage>
        <taxon>Eukaryota</taxon>
        <taxon>Metazoa</taxon>
        <taxon>Ecdysozoa</taxon>
        <taxon>Arthropoda</taxon>
        <taxon>Hexapoda</taxon>
        <taxon>Insecta</taxon>
        <taxon>Pterygota</taxon>
        <taxon>Neoptera</taxon>
        <taxon>Endopterygota</taxon>
        <taxon>Lepidoptera</taxon>
        <taxon>Glossata</taxon>
        <taxon>Ditrysia</taxon>
        <taxon>Bombycoidea</taxon>
        <taxon>Sphingidae</taxon>
        <taxon>Sphinginae</taxon>
        <taxon>Sphingini</taxon>
        <taxon>Manduca</taxon>
    </lineage>
</organism>
<reference evidence="5 6" key="1">
    <citation type="journal article" date="2008" name="Mol. Immunol.">
        <title>A novel ML protein from Manduca sexta may function as a key accessory protein for lipopolysaccharide signaling.</title>
        <authorList>
            <person name="Ao J.Q."/>
            <person name="Ling E."/>
            <person name="Rao X.J."/>
            <person name="Yu X.Q."/>
        </authorList>
    </citation>
    <scope>NUCLEOTIDE SEQUENCE [MRNA]</scope>
    <scope>PROTEIN SEQUENCE OF 19-41</scope>
    <scope>FUNCTION</scope>
    <scope>SUBCELLULAR LOCATION</scope>
    <scope>TISSUE SPECIFICITY</scope>
    <scope>INDUCTION</scope>
    <scope>GLYCOSYLATION</scope>
    <scope>MASS SPECTROMETRY</scope>
    <source>
        <tissue evidence="3">Fat body</tissue>
        <tissue evidence="3">Larval hemolymph</tissue>
    </source>
</reference>
<protein>
    <recommendedName>
        <fullName evidence="4">MD-2-related lipid-recognition protein</fullName>
        <shortName evidence="4">MsML-1</shortName>
    </recommendedName>
</protein>
<feature type="signal peptide" evidence="3">
    <location>
        <begin position="1"/>
        <end position="18"/>
    </location>
</feature>
<feature type="chain" id="PRO_0000407280" description="MD-2-related lipid-recognition protein" evidence="3">
    <location>
        <begin position="19"/>
        <end position="151"/>
    </location>
</feature>
<feature type="glycosylation site" description="N-linked (GlcNAc...) asparagine" evidence="2">
    <location>
        <position position="58"/>
    </location>
</feature>
<feature type="disulfide bond" evidence="1">
    <location>
        <begin position="27"/>
        <end position="141"/>
    </location>
</feature>
<feature type="disulfide bond" evidence="1">
    <location>
        <begin position="45"/>
        <end position="51"/>
    </location>
</feature>
<feature type="disulfide bond" evidence="1">
    <location>
        <begin position="95"/>
        <end position="100"/>
    </location>
</feature>
<dbReference type="EMBL" id="EU329722">
    <property type="protein sequence ID" value="ABY55152.1"/>
    <property type="molecule type" value="mRNA"/>
</dbReference>
<dbReference type="SMR" id="B0FHH8"/>
<dbReference type="EnsemblMetazoa" id="XM_030174457.2">
    <property type="protein sequence ID" value="XP_030030317.1"/>
    <property type="gene ID" value="LOC115447422"/>
</dbReference>
<dbReference type="OrthoDB" id="6576058at2759"/>
<dbReference type="GO" id="GO:0005576">
    <property type="term" value="C:extracellular region"/>
    <property type="evidence" value="ECO:0007669"/>
    <property type="project" value="UniProtKB-SubCell"/>
</dbReference>
<dbReference type="GO" id="GO:0032934">
    <property type="term" value="F:sterol binding"/>
    <property type="evidence" value="ECO:0007669"/>
    <property type="project" value="InterPro"/>
</dbReference>
<dbReference type="GO" id="GO:0015918">
    <property type="term" value="P:sterol transport"/>
    <property type="evidence" value="ECO:0007669"/>
    <property type="project" value="InterPro"/>
</dbReference>
<dbReference type="FunFam" id="2.60.40.770:FF:000001">
    <property type="entry name" value="NPC intracellular cholesterol transporter 2"/>
    <property type="match status" value="1"/>
</dbReference>
<dbReference type="Gene3D" id="2.60.40.770">
    <property type="match status" value="1"/>
</dbReference>
<dbReference type="InterPro" id="IPR014756">
    <property type="entry name" value="Ig_E-set"/>
</dbReference>
<dbReference type="InterPro" id="IPR003172">
    <property type="entry name" value="ML_dom"/>
</dbReference>
<dbReference type="InterPro" id="IPR039670">
    <property type="entry name" value="NPC2-like"/>
</dbReference>
<dbReference type="PANTHER" id="PTHR11306:SF55">
    <property type="entry name" value="GEO08227P1-RELATED"/>
    <property type="match status" value="1"/>
</dbReference>
<dbReference type="PANTHER" id="PTHR11306">
    <property type="entry name" value="NIEMANN PICK TYPE C2 PROTEIN NPC2-RELATED"/>
    <property type="match status" value="1"/>
</dbReference>
<dbReference type="Pfam" id="PF02221">
    <property type="entry name" value="E1_DerP2_DerF2"/>
    <property type="match status" value="1"/>
</dbReference>
<dbReference type="SMART" id="SM00737">
    <property type="entry name" value="ML"/>
    <property type="match status" value="1"/>
</dbReference>
<dbReference type="SUPFAM" id="SSF81296">
    <property type="entry name" value="E set domains"/>
    <property type="match status" value="1"/>
</dbReference>
<accession>B0FHH8</accession>
<evidence type="ECO:0000250" key="1">
    <source>
        <dbReference type="UniProtKB" id="P49278"/>
    </source>
</evidence>
<evidence type="ECO:0000255" key="2"/>
<evidence type="ECO:0000269" key="3">
    <source>
    </source>
</evidence>
<evidence type="ECO:0000303" key="4">
    <source>
    </source>
</evidence>
<evidence type="ECO:0000305" key="5"/>
<evidence type="ECO:0000312" key="6">
    <source>
        <dbReference type="EMBL" id="ABY55152.1"/>
    </source>
</evidence>
<proteinExistence type="evidence at protein level"/>
<keyword id="KW-0903">Direct protein sequencing</keyword>
<keyword id="KW-1015">Disulfide bond</keyword>
<keyword id="KW-0325">Glycoprotein</keyword>
<keyword id="KW-0446">Lipid-binding</keyword>
<keyword id="KW-0964">Secreted</keyword>
<keyword id="KW-0732">Signal</keyword>